<gene>
    <name evidence="8" type="primary">ATM1</name>
    <name type="ordered locus">KLLA0A10131g</name>
</gene>
<sequence>MIMFRSLSVTPVWKAGLSLSHRSIPINSRLSSVRNYISIGCANKTGSRLLRSAGVSSQYKDFRRFNSSSNGNGTDKNASVAPKTEVKKIVPPKPSTNGKSKTPTISELRIMKDLFKYIWPSGDNKVKIRVLIALALLIGAKLLNVQVPFFFKQTIDSMNIEWGPDVATVLPVAITMTILSYGAARFGAVMFGELRNAVFAKVAQNAIRKVSLQTFQHLMKLDLGWHLSRQTGGLTRAMDRGTKGISYVLSAMVFHMIPITFEISVVCGILTYQFGSSFAAMTFVTMLLYSFFTFKTTAWRTEFRRSANRADNKAASVALDSLINFEAVKYFNNEEYLANKYHQSLSKYRDSQIKVAQSLAFLNAGQNFIFTSALTAMMYMGASGVMEGALTVGDLVLINQLVFQLSVPLNFLGSVYRELKQSLIDMESLFKLQKNPILIKNTERPLMLPEHLPCEIKFENVTFGYQPDRNILKNATFTIAPGKKTAIVGPSGSGKSTILRLVFRFYDPQQGRILLDGKDIRELDLDELRRIVGVVPQDTPLFNDTIWENVKFGRINATDNEIVTAIEKAQLSDLIHKLPKGTETIVGERGLMISGGEKQRLAIARVLLKDTPIMFFDEATSALDTHTEQSLLKTIKENFSDVAKTSVYIAHRLRTIADADKIIVLENGAVREEGTHNALLANPNSLYSELWNIQENLDMLEDELEDELKLEKEPRTSKKD</sequence>
<name>ATM1_KLULA</name>
<organism>
    <name type="scientific">Kluyveromyces lactis (strain ATCC 8585 / CBS 2359 / DSM 70799 / NBRC 1267 / NRRL Y-1140 / WM37)</name>
    <name type="common">Yeast</name>
    <name type="synonym">Candida sphaerica</name>
    <dbReference type="NCBI Taxonomy" id="284590"/>
    <lineage>
        <taxon>Eukaryota</taxon>
        <taxon>Fungi</taxon>
        <taxon>Dikarya</taxon>
        <taxon>Ascomycota</taxon>
        <taxon>Saccharomycotina</taxon>
        <taxon>Saccharomycetes</taxon>
        <taxon>Saccharomycetales</taxon>
        <taxon>Saccharomycetaceae</taxon>
        <taxon>Kluyveromyces</taxon>
    </lineage>
</organism>
<dbReference type="EC" id="7.-.-.-" evidence="2"/>
<dbReference type="EMBL" id="CR382121">
    <property type="protein sequence ID" value="CAH03031.1"/>
    <property type="molecule type" value="Genomic_DNA"/>
</dbReference>
<dbReference type="RefSeq" id="XP_451443.1">
    <property type="nucleotide sequence ID" value="XM_451443.1"/>
</dbReference>
<dbReference type="SMR" id="Q6CX96"/>
<dbReference type="FunCoup" id="Q6CX96">
    <property type="interactions" value="698"/>
</dbReference>
<dbReference type="STRING" id="284590.Q6CX96"/>
<dbReference type="PaxDb" id="284590-Q6CX96"/>
<dbReference type="KEGG" id="kla:KLLA0_A10131g"/>
<dbReference type="eggNOG" id="KOG0057">
    <property type="taxonomic scope" value="Eukaryota"/>
</dbReference>
<dbReference type="HOGENOM" id="CLU_000604_84_1_1"/>
<dbReference type="InParanoid" id="Q6CX96"/>
<dbReference type="OMA" id="VFHIIPI"/>
<dbReference type="Proteomes" id="UP000000598">
    <property type="component" value="Chromosome A"/>
</dbReference>
<dbReference type="GO" id="GO:0005743">
    <property type="term" value="C:mitochondrial inner membrane"/>
    <property type="evidence" value="ECO:0007669"/>
    <property type="project" value="UniProtKB-SubCell"/>
</dbReference>
<dbReference type="GO" id="GO:0140359">
    <property type="term" value="F:ABC-type transporter activity"/>
    <property type="evidence" value="ECO:0007669"/>
    <property type="project" value="InterPro"/>
</dbReference>
<dbReference type="GO" id="GO:0005524">
    <property type="term" value="F:ATP binding"/>
    <property type="evidence" value="ECO:0007669"/>
    <property type="project" value="UniProtKB-KW"/>
</dbReference>
<dbReference type="GO" id="GO:0016887">
    <property type="term" value="F:ATP hydrolysis activity"/>
    <property type="evidence" value="ECO:0007669"/>
    <property type="project" value="InterPro"/>
</dbReference>
<dbReference type="GO" id="GO:0006879">
    <property type="term" value="P:intracellular iron ion homeostasis"/>
    <property type="evidence" value="ECO:0007669"/>
    <property type="project" value="TreeGrafter"/>
</dbReference>
<dbReference type="CDD" id="cd18582">
    <property type="entry name" value="ABC_6TM_ATM1_ABCB7"/>
    <property type="match status" value="1"/>
</dbReference>
<dbReference type="FunFam" id="1.20.1560.10:FF:000004">
    <property type="entry name" value="ATP-binding cassette sub-family B member 7"/>
    <property type="match status" value="1"/>
</dbReference>
<dbReference type="FunFam" id="3.40.50.300:FF:000287">
    <property type="entry name" value="Multidrug ABC transporter ATP-binding protein"/>
    <property type="match status" value="1"/>
</dbReference>
<dbReference type="Gene3D" id="1.20.1560.10">
    <property type="entry name" value="ABC transporter type 1, transmembrane domain"/>
    <property type="match status" value="1"/>
</dbReference>
<dbReference type="Gene3D" id="3.40.50.300">
    <property type="entry name" value="P-loop containing nucleotide triphosphate hydrolases"/>
    <property type="match status" value="1"/>
</dbReference>
<dbReference type="InterPro" id="IPR003593">
    <property type="entry name" value="AAA+_ATPase"/>
</dbReference>
<dbReference type="InterPro" id="IPR011527">
    <property type="entry name" value="ABC1_TM_dom"/>
</dbReference>
<dbReference type="InterPro" id="IPR036640">
    <property type="entry name" value="ABC1_TM_sf"/>
</dbReference>
<dbReference type="InterPro" id="IPR003439">
    <property type="entry name" value="ABC_transporter-like_ATP-bd"/>
</dbReference>
<dbReference type="InterPro" id="IPR017871">
    <property type="entry name" value="ABC_transporter-like_CS"/>
</dbReference>
<dbReference type="InterPro" id="IPR027417">
    <property type="entry name" value="P-loop_NTPase"/>
</dbReference>
<dbReference type="InterPro" id="IPR039421">
    <property type="entry name" value="Type_1_exporter"/>
</dbReference>
<dbReference type="PANTHER" id="PTHR24221">
    <property type="entry name" value="ATP-BINDING CASSETTE SUB-FAMILY B"/>
    <property type="match status" value="1"/>
</dbReference>
<dbReference type="PANTHER" id="PTHR24221:SF402">
    <property type="entry name" value="IRON-SULFUR CLUSTERS TRANSPORTER ABCB7, MITOCHONDRIAL"/>
    <property type="match status" value="1"/>
</dbReference>
<dbReference type="Pfam" id="PF00664">
    <property type="entry name" value="ABC_membrane"/>
    <property type="match status" value="1"/>
</dbReference>
<dbReference type="Pfam" id="PF00005">
    <property type="entry name" value="ABC_tran"/>
    <property type="match status" value="1"/>
</dbReference>
<dbReference type="SMART" id="SM00382">
    <property type="entry name" value="AAA"/>
    <property type="match status" value="1"/>
</dbReference>
<dbReference type="SUPFAM" id="SSF90123">
    <property type="entry name" value="ABC transporter transmembrane region"/>
    <property type="match status" value="1"/>
</dbReference>
<dbReference type="SUPFAM" id="SSF52540">
    <property type="entry name" value="P-loop containing nucleoside triphosphate hydrolases"/>
    <property type="match status" value="1"/>
</dbReference>
<dbReference type="PROSITE" id="PS50929">
    <property type="entry name" value="ABC_TM1F"/>
    <property type="match status" value="1"/>
</dbReference>
<dbReference type="PROSITE" id="PS00211">
    <property type="entry name" value="ABC_TRANSPORTER_1"/>
    <property type="match status" value="1"/>
</dbReference>
<dbReference type="PROSITE" id="PS50893">
    <property type="entry name" value="ABC_TRANSPORTER_2"/>
    <property type="match status" value="1"/>
</dbReference>
<evidence type="ECO:0000250" key="1">
    <source>
        <dbReference type="UniProtKB" id="P40416"/>
    </source>
</evidence>
<evidence type="ECO:0000250" key="2">
    <source>
        <dbReference type="UniProtKB" id="Q2G506"/>
    </source>
</evidence>
<evidence type="ECO:0000250" key="3">
    <source>
        <dbReference type="UniProtKB" id="Q9NP58"/>
    </source>
</evidence>
<evidence type="ECO:0000255" key="4"/>
<evidence type="ECO:0000255" key="5">
    <source>
        <dbReference type="PROSITE-ProRule" id="PRU00434"/>
    </source>
</evidence>
<evidence type="ECO:0000255" key="6">
    <source>
        <dbReference type="PROSITE-ProRule" id="PRU00441"/>
    </source>
</evidence>
<evidence type="ECO:0000256" key="7">
    <source>
        <dbReference type="SAM" id="MobiDB-lite"/>
    </source>
</evidence>
<evidence type="ECO:0000305" key="8"/>
<accession>Q6CX96</accession>
<comment type="function">
    <text evidence="1">Performs an essential function in the generation of cytoplasmic iron-sulfur proteins by mediating the ATP-dependent export of Fe/S cluster precursors synthesized by NFS1 and other mitochondrial proteins (By similarity). Hydrolyzes ATP (By similarity). Binds glutathione and may function by transporting a glutathione-conjugated iron-sulfur compound (By similarity).</text>
</comment>
<comment type="subunit">
    <text evidence="1">Homodimer.</text>
</comment>
<comment type="subcellular location">
    <subcellularLocation>
        <location evidence="1">Mitochondrion inner membrane</location>
        <topology evidence="6">Multi-pass membrane protein</topology>
    </subcellularLocation>
</comment>
<comment type="similarity">
    <text evidence="8">Belongs to the ABC transporter superfamily. ABCB family. Heavy Metal importer (TC 3.A.1.210) subfamily.</text>
</comment>
<reference key="1">
    <citation type="journal article" date="2004" name="Nature">
        <title>Genome evolution in yeasts.</title>
        <authorList>
            <person name="Dujon B."/>
            <person name="Sherman D."/>
            <person name="Fischer G."/>
            <person name="Durrens P."/>
            <person name="Casaregola S."/>
            <person name="Lafontaine I."/>
            <person name="de Montigny J."/>
            <person name="Marck C."/>
            <person name="Neuveglise C."/>
            <person name="Talla E."/>
            <person name="Goffard N."/>
            <person name="Frangeul L."/>
            <person name="Aigle M."/>
            <person name="Anthouard V."/>
            <person name="Babour A."/>
            <person name="Barbe V."/>
            <person name="Barnay S."/>
            <person name="Blanchin S."/>
            <person name="Beckerich J.-M."/>
            <person name="Beyne E."/>
            <person name="Bleykasten C."/>
            <person name="Boisrame A."/>
            <person name="Boyer J."/>
            <person name="Cattolico L."/>
            <person name="Confanioleri F."/>
            <person name="de Daruvar A."/>
            <person name="Despons L."/>
            <person name="Fabre E."/>
            <person name="Fairhead C."/>
            <person name="Ferry-Dumazet H."/>
            <person name="Groppi A."/>
            <person name="Hantraye F."/>
            <person name="Hennequin C."/>
            <person name="Jauniaux N."/>
            <person name="Joyet P."/>
            <person name="Kachouri R."/>
            <person name="Kerrest A."/>
            <person name="Koszul R."/>
            <person name="Lemaire M."/>
            <person name="Lesur I."/>
            <person name="Ma L."/>
            <person name="Muller H."/>
            <person name="Nicaud J.-M."/>
            <person name="Nikolski M."/>
            <person name="Oztas S."/>
            <person name="Ozier-Kalogeropoulos O."/>
            <person name="Pellenz S."/>
            <person name="Potier S."/>
            <person name="Richard G.-F."/>
            <person name="Straub M.-L."/>
            <person name="Suleau A."/>
            <person name="Swennen D."/>
            <person name="Tekaia F."/>
            <person name="Wesolowski-Louvel M."/>
            <person name="Westhof E."/>
            <person name="Wirth B."/>
            <person name="Zeniou-Meyer M."/>
            <person name="Zivanovic Y."/>
            <person name="Bolotin-Fukuhara M."/>
            <person name="Thierry A."/>
            <person name="Bouchier C."/>
            <person name="Caudron B."/>
            <person name="Scarpelli C."/>
            <person name="Gaillardin C."/>
            <person name="Weissenbach J."/>
            <person name="Wincker P."/>
            <person name="Souciet J.-L."/>
        </authorList>
    </citation>
    <scope>NUCLEOTIDE SEQUENCE [LARGE SCALE GENOMIC DNA]</scope>
    <source>
        <strain>ATCC 8585 / CBS 2359 / DSM 70799 / NBRC 1267 / NRRL Y-1140 / WM37</strain>
    </source>
</reference>
<protein>
    <recommendedName>
        <fullName evidence="8">Iron-sulfur clusters transporter ATM1, mitochondrial</fullName>
        <ecNumber evidence="2">7.-.-.-</ecNumber>
    </recommendedName>
</protein>
<keyword id="KW-0067">ATP-binding</keyword>
<keyword id="KW-0472">Membrane</keyword>
<keyword id="KW-0496">Mitochondrion</keyword>
<keyword id="KW-0999">Mitochondrion inner membrane</keyword>
<keyword id="KW-0547">Nucleotide-binding</keyword>
<keyword id="KW-1185">Reference proteome</keyword>
<keyword id="KW-0809">Transit peptide</keyword>
<keyword id="KW-1278">Translocase</keyword>
<keyword id="KW-0812">Transmembrane</keyword>
<keyword id="KW-1133">Transmembrane helix</keyword>
<keyword id="KW-0813">Transport</keyword>
<proteinExistence type="inferred from homology"/>
<feature type="transit peptide" description="Mitochondrion" evidence="4">
    <location>
        <begin position="1"/>
        <end position="36"/>
    </location>
</feature>
<feature type="chain" id="PRO_0000255447" description="Iron-sulfur clusters transporter ATM1, mitochondrial">
    <location>
        <begin position="37"/>
        <end position="720"/>
    </location>
</feature>
<feature type="topological domain" description="Mitochondrial matrix" evidence="1">
    <location>
        <begin position="37"/>
        <end position="129"/>
    </location>
</feature>
<feature type="transmembrane region" description="Helical" evidence="6">
    <location>
        <begin position="130"/>
        <end position="151"/>
    </location>
</feature>
<feature type="topological domain" description="Mitochondrial intermembrane" evidence="1">
    <location>
        <begin position="152"/>
        <end position="175"/>
    </location>
</feature>
<feature type="transmembrane region" description="Helical" evidence="6">
    <location>
        <begin position="176"/>
        <end position="199"/>
    </location>
</feature>
<feature type="topological domain" description="Mitochondrial matrix" evidence="1">
    <location>
        <begin position="200"/>
        <end position="248"/>
    </location>
</feature>
<feature type="transmembrane region" description="Helical" evidence="6">
    <location>
        <begin position="249"/>
        <end position="272"/>
    </location>
</feature>
<feature type="topological domain" description="Mitochondrial intermembrane" evidence="1">
    <location>
        <position position="273"/>
    </location>
</feature>
<feature type="transmembrane region" description="Helical" evidence="6">
    <location>
        <begin position="274"/>
        <end position="294"/>
    </location>
</feature>
<feature type="topological domain" description="Mitochondrial matrix" evidence="1">
    <location>
        <begin position="295"/>
        <end position="360"/>
    </location>
</feature>
<feature type="transmembrane region" description="Helical" evidence="6">
    <location>
        <begin position="361"/>
        <end position="379"/>
    </location>
</feature>
<feature type="topological domain" description="Mitochondrial intermembrane" evidence="1">
    <location>
        <begin position="380"/>
        <end position="394"/>
    </location>
</feature>
<feature type="transmembrane region" description="Helical" evidence="6">
    <location>
        <begin position="395"/>
        <end position="416"/>
    </location>
</feature>
<feature type="topological domain" description="Mitochondrial matrix" evidence="1">
    <location>
        <begin position="417"/>
        <end position="720"/>
    </location>
</feature>
<feature type="domain" description="ABC transmembrane type-1" evidence="6">
    <location>
        <begin position="130"/>
        <end position="421"/>
    </location>
</feature>
<feature type="domain" description="ABC transporter" evidence="5">
    <location>
        <begin position="456"/>
        <end position="692"/>
    </location>
</feature>
<feature type="region of interest" description="Disordered" evidence="7">
    <location>
        <begin position="64"/>
        <end position="102"/>
    </location>
</feature>
<feature type="compositionally biased region" description="Polar residues" evidence="7">
    <location>
        <begin position="64"/>
        <end position="77"/>
    </location>
</feature>
<feature type="binding site" evidence="1">
    <location>
        <begin position="300"/>
        <end position="304"/>
    </location>
    <ligand>
        <name>glutathione</name>
        <dbReference type="ChEBI" id="CHEBI:57925"/>
    </ligand>
</feature>
<feature type="binding site" evidence="1">
    <location>
        <begin position="363"/>
        <end position="366"/>
    </location>
    <ligand>
        <name>glutathione</name>
        <dbReference type="ChEBI" id="CHEBI:57925"/>
    </ligand>
</feature>
<feature type="binding site" evidence="2">
    <location>
        <position position="413"/>
    </location>
    <ligand>
        <name>glutathione</name>
        <dbReference type="ChEBI" id="CHEBI:57925"/>
    </ligand>
</feature>
<feature type="binding site" evidence="3">
    <location>
        <position position="465"/>
    </location>
    <ligand>
        <name>ATP</name>
        <dbReference type="ChEBI" id="CHEBI:30616"/>
    </ligand>
</feature>
<feature type="binding site" evidence="5">
    <location>
        <begin position="489"/>
        <end position="500"/>
    </location>
    <ligand>
        <name>ATP</name>
        <dbReference type="ChEBI" id="CHEBI:30616"/>
    </ligand>
</feature>